<proteinExistence type="inferred from homology"/>
<reference key="1">
    <citation type="journal article" date="1999" name="Parasitol. Res.">
        <title>Cloning and characterization of iron-containing superoxide dismutase from the human malaria species Plasmodium ovale, P. malariae and P. vivax.</title>
        <authorList>
            <person name="Baert C.B."/>
            <person name="Deloron P."/>
            <person name="Viscogliosi E."/>
            <person name="Delgado-Viscogliosi P."/>
            <person name="Camus D."/>
            <person name="Dive D."/>
        </authorList>
    </citation>
    <scope>NUCLEOTIDE SEQUENCE [GENOMIC DNA]</scope>
</reference>
<keyword id="KW-0963">Cytoplasm</keyword>
<keyword id="KW-0408">Iron</keyword>
<keyword id="KW-0479">Metal-binding</keyword>
<keyword id="KW-0560">Oxidoreductase</keyword>
<sequence>MVITLPKLKYALNALSPHISEETLNFHYNKHHAGYVNKLNTLIKDTPFAEKSLLDIVKESSGAIFNNAAQIWNHTFYWDSMGPDCGGEPHGEIKEKIQEDFGSFNNFKEQFSNILCGHFGSGWGWLALNNNNKLVILQTHDAGNPIKDNTGIPILTCDIWEHAYYIDYRNDRASYVKAWWNLVNWNFANENLKKAMQK</sequence>
<gene>
    <name type="primary">SODB</name>
</gene>
<accession>Q9Y1A9</accession>
<organism>
    <name type="scientific">Plasmodium vivax</name>
    <dbReference type="NCBI Taxonomy" id="5855"/>
    <lineage>
        <taxon>Eukaryota</taxon>
        <taxon>Sar</taxon>
        <taxon>Alveolata</taxon>
        <taxon>Apicomplexa</taxon>
        <taxon>Aconoidasida</taxon>
        <taxon>Haemosporida</taxon>
        <taxon>Plasmodiidae</taxon>
        <taxon>Plasmodium</taxon>
        <taxon>Plasmodium (Plasmodium)</taxon>
    </lineage>
</organism>
<name>SODF_PLAVI</name>
<evidence type="ECO:0000250" key="1"/>
<evidence type="ECO:0000305" key="2"/>
<protein>
    <recommendedName>
        <fullName>Superoxide dismutase [Fe]</fullName>
        <ecNumber>1.15.1.1</ecNumber>
    </recommendedName>
    <alternativeName>
        <fullName>FeSOD</fullName>
    </alternativeName>
</protein>
<feature type="chain" id="PRO_0000290114" description="Superoxide dismutase [Fe]">
    <location>
        <begin position="1"/>
        <end position="198"/>
    </location>
</feature>
<feature type="binding site" evidence="1">
    <location>
        <position position="27"/>
    </location>
    <ligand>
        <name>Fe cation</name>
        <dbReference type="ChEBI" id="CHEBI:24875"/>
    </ligand>
</feature>
<feature type="binding site" evidence="1">
    <location>
        <position position="74"/>
    </location>
    <ligand>
        <name>Fe cation</name>
        <dbReference type="ChEBI" id="CHEBI:24875"/>
    </ligand>
</feature>
<feature type="binding site" evidence="1">
    <location>
        <position position="158"/>
    </location>
    <ligand>
        <name>Fe cation</name>
        <dbReference type="ChEBI" id="CHEBI:24875"/>
    </ligand>
</feature>
<feature type="binding site" evidence="1">
    <location>
        <position position="162"/>
    </location>
    <ligand>
        <name>Fe cation</name>
        <dbReference type="ChEBI" id="CHEBI:24875"/>
    </ligand>
</feature>
<dbReference type="EC" id="1.15.1.1"/>
<dbReference type="EMBL" id="AF139529">
    <property type="protein sequence ID" value="AAD43524.1"/>
    <property type="molecule type" value="Genomic_DNA"/>
</dbReference>
<dbReference type="SMR" id="Q9Y1A9"/>
<dbReference type="VEuPathDB" id="PlasmoDB:PVP01_1425500"/>
<dbReference type="VEuPathDB" id="PlasmoDB:PVPAM_140033200"/>
<dbReference type="VEuPathDB" id="PlasmoDB:PVW1_140031800"/>
<dbReference type="VEuPathDB" id="PlasmoDB:PVX_123030"/>
<dbReference type="eggNOG" id="KOG0876">
    <property type="taxonomic scope" value="Eukaryota"/>
</dbReference>
<dbReference type="GO" id="GO:0005737">
    <property type="term" value="C:cytoplasm"/>
    <property type="evidence" value="ECO:0007669"/>
    <property type="project" value="UniProtKB-SubCell"/>
</dbReference>
<dbReference type="GO" id="GO:0046872">
    <property type="term" value="F:metal ion binding"/>
    <property type="evidence" value="ECO:0007669"/>
    <property type="project" value="UniProtKB-KW"/>
</dbReference>
<dbReference type="GO" id="GO:0004784">
    <property type="term" value="F:superoxide dismutase activity"/>
    <property type="evidence" value="ECO:0007669"/>
    <property type="project" value="UniProtKB-EC"/>
</dbReference>
<dbReference type="FunFam" id="1.10.287.990:FF:000002">
    <property type="entry name" value="Superoxide dismutase"/>
    <property type="match status" value="1"/>
</dbReference>
<dbReference type="FunFam" id="3.55.40.20:FF:000001">
    <property type="entry name" value="Superoxide dismutase"/>
    <property type="match status" value="1"/>
</dbReference>
<dbReference type="Gene3D" id="1.10.287.990">
    <property type="entry name" value="Fe,Mn superoxide dismutase (SOD) domain"/>
    <property type="match status" value="1"/>
</dbReference>
<dbReference type="Gene3D" id="3.55.40.20">
    <property type="entry name" value="Iron/manganese superoxide dismutase, C-terminal domain"/>
    <property type="match status" value="1"/>
</dbReference>
<dbReference type="InterPro" id="IPR001189">
    <property type="entry name" value="Mn/Fe_SOD"/>
</dbReference>
<dbReference type="InterPro" id="IPR019833">
    <property type="entry name" value="Mn/Fe_SOD_BS"/>
</dbReference>
<dbReference type="InterPro" id="IPR019832">
    <property type="entry name" value="Mn/Fe_SOD_C"/>
</dbReference>
<dbReference type="InterPro" id="IPR019831">
    <property type="entry name" value="Mn/Fe_SOD_N"/>
</dbReference>
<dbReference type="InterPro" id="IPR036324">
    <property type="entry name" value="Mn/Fe_SOD_N_sf"/>
</dbReference>
<dbReference type="InterPro" id="IPR036314">
    <property type="entry name" value="SOD_C_sf"/>
</dbReference>
<dbReference type="PANTHER" id="PTHR42769">
    <property type="entry name" value="SUPEROXIDE DISMUTASE"/>
    <property type="match status" value="1"/>
</dbReference>
<dbReference type="PANTHER" id="PTHR42769:SF3">
    <property type="entry name" value="SUPEROXIDE DISMUTASE [FE] 2, CHLOROPLASTIC"/>
    <property type="match status" value="1"/>
</dbReference>
<dbReference type="Pfam" id="PF02777">
    <property type="entry name" value="Sod_Fe_C"/>
    <property type="match status" value="1"/>
</dbReference>
<dbReference type="Pfam" id="PF00081">
    <property type="entry name" value="Sod_Fe_N"/>
    <property type="match status" value="1"/>
</dbReference>
<dbReference type="PIRSF" id="PIRSF000349">
    <property type="entry name" value="SODismutase"/>
    <property type="match status" value="1"/>
</dbReference>
<dbReference type="PRINTS" id="PR01703">
    <property type="entry name" value="MNSODISMTASE"/>
</dbReference>
<dbReference type="SUPFAM" id="SSF54719">
    <property type="entry name" value="Fe,Mn superoxide dismutase (SOD), C-terminal domain"/>
    <property type="match status" value="1"/>
</dbReference>
<dbReference type="SUPFAM" id="SSF46609">
    <property type="entry name" value="Fe,Mn superoxide dismutase (SOD), N-terminal domain"/>
    <property type="match status" value="1"/>
</dbReference>
<dbReference type="PROSITE" id="PS00088">
    <property type="entry name" value="SOD_MN"/>
    <property type="match status" value="1"/>
</dbReference>
<comment type="function">
    <text evidence="1">Destroys superoxide anion radicals which are normally produced within the cells and which are toxic to biological systems.</text>
</comment>
<comment type="catalytic activity">
    <reaction>
        <text>2 superoxide + 2 H(+) = H2O2 + O2</text>
        <dbReference type="Rhea" id="RHEA:20696"/>
        <dbReference type="ChEBI" id="CHEBI:15378"/>
        <dbReference type="ChEBI" id="CHEBI:15379"/>
        <dbReference type="ChEBI" id="CHEBI:16240"/>
        <dbReference type="ChEBI" id="CHEBI:18421"/>
        <dbReference type="EC" id="1.15.1.1"/>
    </reaction>
</comment>
<comment type="cofactor">
    <cofactor evidence="1">
        <name>Fe cation</name>
        <dbReference type="ChEBI" id="CHEBI:24875"/>
    </cofactor>
    <text evidence="1">Binds 1 Fe cation per subunit.</text>
</comment>
<comment type="subunit">
    <text evidence="1">Homodimer.</text>
</comment>
<comment type="subcellular location">
    <subcellularLocation>
        <location evidence="2">Cytoplasm</location>
    </subcellularLocation>
</comment>
<comment type="similarity">
    <text evidence="2">Belongs to the iron/manganese superoxide dismutase family.</text>
</comment>